<feature type="chain" id="PRO_0000165464" description="S-adenosylmethionine:tRNA ribosyltransferase-isomerase">
    <location>
        <begin position="1"/>
        <end position="356"/>
    </location>
</feature>
<sequence>MKKSDFHYDLPDELIAQAPLAERAASRLLVVPPSPQALADRQVRDLPELLQPGDLLIFNDTRVIPARLFGQKASGGRVEILIERLLGERQARVQIGASKSPKAGSLIALDAGGQAEVLGRDGEFYLLRFEIPTPLEHWLLEAGRLPLPPYIRREPGVEDRERYQTVFAREVGAVAAPTAGLHFDEPLLARLRERGVEFGHVTLHVGAGTFQPVRVDKLDQHVMHKEWLNVGAALVEQVRRTRARGGRVIAVGTTVVRSLESAWRKTEAAPEGELQPFAGETQIFILPGYRIRSVDAMVTNFHLPESTLMMMVSAFAGRERIFAAYHHAIAQRYRFFSYGDAMLLWGRESGLGNGES</sequence>
<reference key="1">
    <citation type="journal article" date="2002" name="Nature">
        <title>Comparison of the genomes of two Xanthomonas pathogens with differing host specificities.</title>
        <authorList>
            <person name="da Silva A.C.R."/>
            <person name="Ferro J.A."/>
            <person name="Reinach F.C."/>
            <person name="Farah C.S."/>
            <person name="Furlan L.R."/>
            <person name="Quaggio R.B."/>
            <person name="Monteiro-Vitorello C.B."/>
            <person name="Van Sluys M.A."/>
            <person name="Almeida N.F. Jr."/>
            <person name="Alves L.M.C."/>
            <person name="do Amaral A.M."/>
            <person name="Bertolini M.C."/>
            <person name="Camargo L.E.A."/>
            <person name="Camarotte G."/>
            <person name="Cannavan F."/>
            <person name="Cardozo J."/>
            <person name="Chambergo F."/>
            <person name="Ciapina L.P."/>
            <person name="Cicarelli R.M.B."/>
            <person name="Coutinho L.L."/>
            <person name="Cursino-Santos J.R."/>
            <person name="El-Dorry H."/>
            <person name="Faria J.B."/>
            <person name="Ferreira A.J.S."/>
            <person name="Ferreira R.C.C."/>
            <person name="Ferro M.I.T."/>
            <person name="Formighieri E.F."/>
            <person name="Franco M.C."/>
            <person name="Greggio C.C."/>
            <person name="Gruber A."/>
            <person name="Katsuyama A.M."/>
            <person name="Kishi L.T."/>
            <person name="Leite R.P."/>
            <person name="Lemos E.G.M."/>
            <person name="Lemos M.V.F."/>
            <person name="Locali E.C."/>
            <person name="Machado M.A."/>
            <person name="Madeira A.M.B.N."/>
            <person name="Martinez-Rossi N.M."/>
            <person name="Martins E.C."/>
            <person name="Meidanis J."/>
            <person name="Menck C.F.M."/>
            <person name="Miyaki C.Y."/>
            <person name="Moon D.H."/>
            <person name="Moreira L.M."/>
            <person name="Novo M.T.M."/>
            <person name="Okura V.K."/>
            <person name="Oliveira M.C."/>
            <person name="Oliveira V.R."/>
            <person name="Pereira H.A."/>
            <person name="Rossi A."/>
            <person name="Sena J.A.D."/>
            <person name="Silva C."/>
            <person name="de Souza R.F."/>
            <person name="Spinola L.A.F."/>
            <person name="Takita M.A."/>
            <person name="Tamura R.E."/>
            <person name="Teixeira E.C."/>
            <person name="Tezza R.I.D."/>
            <person name="Trindade dos Santos M."/>
            <person name="Truffi D."/>
            <person name="Tsai S.M."/>
            <person name="White F.F."/>
            <person name="Setubal J.C."/>
            <person name="Kitajima J.P."/>
        </authorList>
    </citation>
    <scope>NUCLEOTIDE SEQUENCE [LARGE SCALE GENOMIC DNA]</scope>
    <source>
        <strain>306</strain>
    </source>
</reference>
<keyword id="KW-0963">Cytoplasm</keyword>
<keyword id="KW-0671">Queuosine biosynthesis</keyword>
<keyword id="KW-0949">S-adenosyl-L-methionine</keyword>
<keyword id="KW-0808">Transferase</keyword>
<protein>
    <recommendedName>
        <fullName evidence="1">S-adenosylmethionine:tRNA ribosyltransferase-isomerase</fullName>
        <ecNumber evidence="1">2.4.99.17</ecNumber>
    </recommendedName>
    <alternativeName>
        <fullName evidence="1">Queuosine biosynthesis protein QueA</fullName>
    </alternativeName>
</protein>
<comment type="function">
    <text evidence="1">Transfers and isomerizes the ribose moiety from AdoMet to the 7-aminomethyl group of 7-deazaguanine (preQ1-tRNA) to give epoxyqueuosine (oQ-tRNA).</text>
</comment>
<comment type="catalytic activity">
    <reaction evidence="1">
        <text>7-aminomethyl-7-carbaguanosine(34) in tRNA + S-adenosyl-L-methionine = epoxyqueuosine(34) in tRNA + adenine + L-methionine + 2 H(+)</text>
        <dbReference type="Rhea" id="RHEA:32155"/>
        <dbReference type="Rhea" id="RHEA-COMP:10342"/>
        <dbReference type="Rhea" id="RHEA-COMP:18582"/>
        <dbReference type="ChEBI" id="CHEBI:15378"/>
        <dbReference type="ChEBI" id="CHEBI:16708"/>
        <dbReference type="ChEBI" id="CHEBI:57844"/>
        <dbReference type="ChEBI" id="CHEBI:59789"/>
        <dbReference type="ChEBI" id="CHEBI:82833"/>
        <dbReference type="ChEBI" id="CHEBI:194443"/>
        <dbReference type="EC" id="2.4.99.17"/>
    </reaction>
</comment>
<comment type="pathway">
    <text evidence="1">tRNA modification; tRNA-queuosine biosynthesis.</text>
</comment>
<comment type="subunit">
    <text evidence="1">Monomer.</text>
</comment>
<comment type="subcellular location">
    <subcellularLocation>
        <location evidence="1">Cytoplasm</location>
    </subcellularLocation>
</comment>
<comment type="similarity">
    <text evidence="1">Belongs to the QueA family.</text>
</comment>
<dbReference type="EC" id="2.4.99.17" evidence="1"/>
<dbReference type="EMBL" id="AE008923">
    <property type="protein sequence ID" value="AAM37365.1"/>
    <property type="molecule type" value="Genomic_DNA"/>
</dbReference>
<dbReference type="RefSeq" id="WP_011051640.1">
    <property type="nucleotide sequence ID" value="NC_003919.1"/>
</dbReference>
<dbReference type="SMR" id="Q8PJL6"/>
<dbReference type="GeneID" id="66911621"/>
<dbReference type="KEGG" id="xac:XAC2514"/>
<dbReference type="eggNOG" id="COG0809">
    <property type="taxonomic scope" value="Bacteria"/>
</dbReference>
<dbReference type="HOGENOM" id="CLU_039110_1_0_6"/>
<dbReference type="UniPathway" id="UPA00392"/>
<dbReference type="Proteomes" id="UP000000576">
    <property type="component" value="Chromosome"/>
</dbReference>
<dbReference type="GO" id="GO:0005737">
    <property type="term" value="C:cytoplasm"/>
    <property type="evidence" value="ECO:0007669"/>
    <property type="project" value="UniProtKB-SubCell"/>
</dbReference>
<dbReference type="GO" id="GO:0051075">
    <property type="term" value="F:S-adenosylmethionine:tRNA ribosyltransferase-isomerase activity"/>
    <property type="evidence" value="ECO:0007669"/>
    <property type="project" value="UniProtKB-EC"/>
</dbReference>
<dbReference type="GO" id="GO:0008616">
    <property type="term" value="P:queuosine biosynthetic process"/>
    <property type="evidence" value="ECO:0007669"/>
    <property type="project" value="UniProtKB-UniRule"/>
</dbReference>
<dbReference type="GO" id="GO:0002099">
    <property type="term" value="P:tRNA wobble guanine modification"/>
    <property type="evidence" value="ECO:0007669"/>
    <property type="project" value="TreeGrafter"/>
</dbReference>
<dbReference type="FunFam" id="2.40.10.240:FF:000003">
    <property type="entry name" value="S-adenosylmethionine:tRNA ribosyltransferase-isomerase"/>
    <property type="match status" value="1"/>
</dbReference>
<dbReference type="FunFam" id="3.40.1780.10:FF:000001">
    <property type="entry name" value="S-adenosylmethionine:tRNA ribosyltransferase-isomerase"/>
    <property type="match status" value="1"/>
</dbReference>
<dbReference type="Gene3D" id="2.40.10.240">
    <property type="entry name" value="QueA-like"/>
    <property type="match status" value="1"/>
</dbReference>
<dbReference type="Gene3D" id="3.40.1780.10">
    <property type="entry name" value="QueA-like"/>
    <property type="match status" value="1"/>
</dbReference>
<dbReference type="HAMAP" id="MF_00113">
    <property type="entry name" value="QueA"/>
    <property type="match status" value="1"/>
</dbReference>
<dbReference type="InterPro" id="IPR003699">
    <property type="entry name" value="QueA"/>
</dbReference>
<dbReference type="InterPro" id="IPR042118">
    <property type="entry name" value="QueA_dom1"/>
</dbReference>
<dbReference type="InterPro" id="IPR042119">
    <property type="entry name" value="QueA_dom2"/>
</dbReference>
<dbReference type="InterPro" id="IPR036100">
    <property type="entry name" value="QueA_sf"/>
</dbReference>
<dbReference type="NCBIfam" id="NF001140">
    <property type="entry name" value="PRK00147.1"/>
    <property type="match status" value="1"/>
</dbReference>
<dbReference type="NCBIfam" id="TIGR00113">
    <property type="entry name" value="queA"/>
    <property type="match status" value="1"/>
</dbReference>
<dbReference type="PANTHER" id="PTHR30307">
    <property type="entry name" value="S-ADENOSYLMETHIONINE:TRNA RIBOSYLTRANSFERASE-ISOMERASE"/>
    <property type="match status" value="1"/>
</dbReference>
<dbReference type="PANTHER" id="PTHR30307:SF0">
    <property type="entry name" value="S-ADENOSYLMETHIONINE:TRNA RIBOSYLTRANSFERASE-ISOMERASE"/>
    <property type="match status" value="1"/>
</dbReference>
<dbReference type="Pfam" id="PF02547">
    <property type="entry name" value="Queuosine_synth"/>
    <property type="match status" value="1"/>
</dbReference>
<dbReference type="SUPFAM" id="SSF111337">
    <property type="entry name" value="QueA-like"/>
    <property type="match status" value="1"/>
</dbReference>
<evidence type="ECO:0000255" key="1">
    <source>
        <dbReference type="HAMAP-Rule" id="MF_00113"/>
    </source>
</evidence>
<proteinExistence type="inferred from homology"/>
<gene>
    <name evidence="1" type="primary">queA</name>
    <name type="ordered locus">XAC2514</name>
</gene>
<organism>
    <name type="scientific">Xanthomonas axonopodis pv. citri (strain 306)</name>
    <dbReference type="NCBI Taxonomy" id="190486"/>
    <lineage>
        <taxon>Bacteria</taxon>
        <taxon>Pseudomonadati</taxon>
        <taxon>Pseudomonadota</taxon>
        <taxon>Gammaproteobacteria</taxon>
        <taxon>Lysobacterales</taxon>
        <taxon>Lysobacteraceae</taxon>
        <taxon>Xanthomonas</taxon>
    </lineage>
</organism>
<accession>Q8PJL6</accession>
<name>QUEA_XANAC</name>